<organism>
    <name type="scientific">Staphylococcus carnosus (strain TM300)</name>
    <dbReference type="NCBI Taxonomy" id="396513"/>
    <lineage>
        <taxon>Bacteria</taxon>
        <taxon>Bacillati</taxon>
        <taxon>Bacillota</taxon>
        <taxon>Bacilli</taxon>
        <taxon>Bacillales</taxon>
        <taxon>Staphylococcaceae</taxon>
        <taxon>Staphylococcus</taxon>
    </lineage>
</organism>
<dbReference type="EC" id="2.1.1.192" evidence="1"/>
<dbReference type="EMBL" id="AM295250">
    <property type="protein sequence ID" value="CAL27748.1"/>
    <property type="molecule type" value="Genomic_DNA"/>
</dbReference>
<dbReference type="RefSeq" id="WP_015900090.1">
    <property type="nucleotide sequence ID" value="NC_012121.1"/>
</dbReference>
<dbReference type="SMR" id="B9DPM7"/>
<dbReference type="GeneID" id="93793271"/>
<dbReference type="KEGG" id="sca:SCA_0838"/>
<dbReference type="eggNOG" id="COG0820">
    <property type="taxonomic scope" value="Bacteria"/>
</dbReference>
<dbReference type="HOGENOM" id="CLU_029101_0_1_9"/>
<dbReference type="OrthoDB" id="9793973at2"/>
<dbReference type="BioCyc" id="SCAR396513:SCA_RS04240-MONOMER"/>
<dbReference type="Proteomes" id="UP000000444">
    <property type="component" value="Chromosome"/>
</dbReference>
<dbReference type="GO" id="GO:0005737">
    <property type="term" value="C:cytoplasm"/>
    <property type="evidence" value="ECO:0007669"/>
    <property type="project" value="UniProtKB-SubCell"/>
</dbReference>
<dbReference type="GO" id="GO:0051539">
    <property type="term" value="F:4 iron, 4 sulfur cluster binding"/>
    <property type="evidence" value="ECO:0007669"/>
    <property type="project" value="UniProtKB-UniRule"/>
</dbReference>
<dbReference type="GO" id="GO:0046872">
    <property type="term" value="F:metal ion binding"/>
    <property type="evidence" value="ECO:0007669"/>
    <property type="project" value="UniProtKB-KW"/>
</dbReference>
<dbReference type="GO" id="GO:0070040">
    <property type="term" value="F:rRNA (adenine(2503)-C2-)-methyltransferase activity"/>
    <property type="evidence" value="ECO:0007669"/>
    <property type="project" value="UniProtKB-UniRule"/>
</dbReference>
<dbReference type="GO" id="GO:0019843">
    <property type="term" value="F:rRNA binding"/>
    <property type="evidence" value="ECO:0007669"/>
    <property type="project" value="UniProtKB-UniRule"/>
</dbReference>
<dbReference type="GO" id="GO:0002935">
    <property type="term" value="F:tRNA (adenine(37)-C2)-methyltransferase activity"/>
    <property type="evidence" value="ECO:0007669"/>
    <property type="project" value="UniProtKB-UniRule"/>
</dbReference>
<dbReference type="GO" id="GO:0000049">
    <property type="term" value="F:tRNA binding"/>
    <property type="evidence" value="ECO:0007669"/>
    <property type="project" value="UniProtKB-UniRule"/>
</dbReference>
<dbReference type="GO" id="GO:0046677">
    <property type="term" value="P:response to antibiotic"/>
    <property type="evidence" value="ECO:0007669"/>
    <property type="project" value="UniProtKB-KW"/>
</dbReference>
<dbReference type="GO" id="GO:0070475">
    <property type="term" value="P:rRNA base methylation"/>
    <property type="evidence" value="ECO:0007669"/>
    <property type="project" value="UniProtKB-UniRule"/>
</dbReference>
<dbReference type="GO" id="GO:0030488">
    <property type="term" value="P:tRNA methylation"/>
    <property type="evidence" value="ECO:0007669"/>
    <property type="project" value="UniProtKB-UniRule"/>
</dbReference>
<dbReference type="CDD" id="cd01335">
    <property type="entry name" value="Radical_SAM"/>
    <property type="match status" value="1"/>
</dbReference>
<dbReference type="FunFam" id="3.20.20.70:FF:000014">
    <property type="entry name" value="Probable dual-specificity RNA methyltransferase RlmN"/>
    <property type="match status" value="1"/>
</dbReference>
<dbReference type="Gene3D" id="1.10.150.530">
    <property type="match status" value="1"/>
</dbReference>
<dbReference type="Gene3D" id="3.20.20.70">
    <property type="entry name" value="Aldolase class I"/>
    <property type="match status" value="1"/>
</dbReference>
<dbReference type="HAMAP" id="MF_01849">
    <property type="entry name" value="RNA_methyltr_RlmN"/>
    <property type="match status" value="1"/>
</dbReference>
<dbReference type="InterPro" id="IPR013785">
    <property type="entry name" value="Aldolase_TIM"/>
</dbReference>
<dbReference type="InterPro" id="IPR040072">
    <property type="entry name" value="Methyltransferase_A"/>
</dbReference>
<dbReference type="InterPro" id="IPR048641">
    <property type="entry name" value="RlmN_N"/>
</dbReference>
<dbReference type="InterPro" id="IPR027492">
    <property type="entry name" value="RNA_MTrfase_RlmN"/>
</dbReference>
<dbReference type="InterPro" id="IPR004383">
    <property type="entry name" value="rRNA_lsu_MTrfase_RlmN/Cfr"/>
</dbReference>
<dbReference type="InterPro" id="IPR007197">
    <property type="entry name" value="rSAM"/>
</dbReference>
<dbReference type="NCBIfam" id="TIGR00048">
    <property type="entry name" value="rRNA_mod_RlmN"/>
    <property type="match status" value="1"/>
</dbReference>
<dbReference type="PANTHER" id="PTHR30544">
    <property type="entry name" value="23S RRNA METHYLTRANSFERASE"/>
    <property type="match status" value="1"/>
</dbReference>
<dbReference type="PANTHER" id="PTHR30544:SF5">
    <property type="entry name" value="RADICAL SAM CORE DOMAIN-CONTAINING PROTEIN"/>
    <property type="match status" value="1"/>
</dbReference>
<dbReference type="Pfam" id="PF04055">
    <property type="entry name" value="Radical_SAM"/>
    <property type="match status" value="1"/>
</dbReference>
<dbReference type="Pfam" id="PF21016">
    <property type="entry name" value="RlmN_N"/>
    <property type="match status" value="1"/>
</dbReference>
<dbReference type="PIRSF" id="PIRSF006004">
    <property type="entry name" value="CHP00048"/>
    <property type="match status" value="1"/>
</dbReference>
<dbReference type="SFLD" id="SFLDF00275">
    <property type="entry name" value="adenosine_C2_methyltransferase"/>
    <property type="match status" value="1"/>
</dbReference>
<dbReference type="SFLD" id="SFLDS00029">
    <property type="entry name" value="Radical_SAM"/>
    <property type="match status" value="1"/>
</dbReference>
<dbReference type="SUPFAM" id="SSF102114">
    <property type="entry name" value="Radical SAM enzymes"/>
    <property type="match status" value="1"/>
</dbReference>
<dbReference type="PROSITE" id="PS51918">
    <property type="entry name" value="RADICAL_SAM"/>
    <property type="match status" value="1"/>
</dbReference>
<feature type="chain" id="PRO_1000188607" description="Probable dual-specificity RNA methyltransferase RlmN">
    <location>
        <begin position="1"/>
        <end position="364"/>
    </location>
</feature>
<feature type="domain" description="Radical SAM core" evidence="2">
    <location>
        <begin position="113"/>
        <end position="346"/>
    </location>
</feature>
<feature type="active site" description="Proton acceptor" evidence="1">
    <location>
        <position position="107"/>
    </location>
</feature>
<feature type="active site" description="S-methylcysteine intermediate" evidence="1">
    <location>
        <position position="351"/>
    </location>
</feature>
<feature type="binding site" evidence="1">
    <location>
        <position position="127"/>
    </location>
    <ligand>
        <name>[4Fe-4S] cluster</name>
        <dbReference type="ChEBI" id="CHEBI:49883"/>
        <note>4Fe-4S-S-AdoMet</note>
    </ligand>
</feature>
<feature type="binding site" evidence="1">
    <location>
        <position position="131"/>
    </location>
    <ligand>
        <name>[4Fe-4S] cluster</name>
        <dbReference type="ChEBI" id="CHEBI:49883"/>
        <note>4Fe-4S-S-AdoMet</note>
    </ligand>
</feature>
<feature type="binding site" evidence="1">
    <location>
        <position position="134"/>
    </location>
    <ligand>
        <name>[4Fe-4S] cluster</name>
        <dbReference type="ChEBI" id="CHEBI:49883"/>
        <note>4Fe-4S-S-AdoMet</note>
    </ligand>
</feature>
<feature type="binding site" evidence="1">
    <location>
        <begin position="177"/>
        <end position="178"/>
    </location>
    <ligand>
        <name>S-adenosyl-L-methionine</name>
        <dbReference type="ChEBI" id="CHEBI:59789"/>
    </ligand>
</feature>
<feature type="binding site" evidence="1">
    <location>
        <position position="209"/>
    </location>
    <ligand>
        <name>S-adenosyl-L-methionine</name>
        <dbReference type="ChEBI" id="CHEBI:59789"/>
    </ligand>
</feature>
<feature type="binding site" evidence="1">
    <location>
        <begin position="232"/>
        <end position="234"/>
    </location>
    <ligand>
        <name>S-adenosyl-L-methionine</name>
        <dbReference type="ChEBI" id="CHEBI:59789"/>
    </ligand>
</feature>
<feature type="binding site" evidence="1">
    <location>
        <position position="308"/>
    </location>
    <ligand>
        <name>S-adenosyl-L-methionine</name>
        <dbReference type="ChEBI" id="CHEBI:59789"/>
    </ligand>
</feature>
<feature type="disulfide bond" description="(transient)" evidence="1">
    <location>
        <begin position="120"/>
        <end position="351"/>
    </location>
</feature>
<protein>
    <recommendedName>
        <fullName evidence="1">Probable dual-specificity RNA methyltransferase RlmN</fullName>
        <ecNumber evidence="1">2.1.1.192</ecNumber>
    </recommendedName>
    <alternativeName>
        <fullName evidence="1">23S rRNA (adenine(2503)-C(2))-methyltransferase</fullName>
    </alternativeName>
    <alternativeName>
        <fullName evidence="1">23S rRNA m2A2503 methyltransferase</fullName>
    </alternativeName>
    <alternativeName>
        <fullName evidence="1">Ribosomal RNA large subunit methyltransferase N</fullName>
    </alternativeName>
    <alternativeName>
        <fullName evidence="1">tRNA (adenine(37)-C(2))-methyltransferase</fullName>
    </alternativeName>
    <alternativeName>
        <fullName evidence="1">tRNA m2A37 methyltransferase</fullName>
    </alternativeName>
</protein>
<comment type="function">
    <text evidence="1">Specifically methylates position 2 of adenine 2503 in 23S rRNA and position 2 of adenine 37 in tRNAs. Confers resistance to some classes of antibiotics.</text>
</comment>
<comment type="catalytic activity">
    <reaction evidence="1">
        <text>adenosine(2503) in 23S rRNA + 2 reduced [2Fe-2S]-[ferredoxin] + 2 S-adenosyl-L-methionine = 2-methyladenosine(2503) in 23S rRNA + 5'-deoxyadenosine + L-methionine + 2 oxidized [2Fe-2S]-[ferredoxin] + S-adenosyl-L-homocysteine</text>
        <dbReference type="Rhea" id="RHEA:42916"/>
        <dbReference type="Rhea" id="RHEA-COMP:10000"/>
        <dbReference type="Rhea" id="RHEA-COMP:10001"/>
        <dbReference type="Rhea" id="RHEA-COMP:10152"/>
        <dbReference type="Rhea" id="RHEA-COMP:10282"/>
        <dbReference type="ChEBI" id="CHEBI:17319"/>
        <dbReference type="ChEBI" id="CHEBI:33737"/>
        <dbReference type="ChEBI" id="CHEBI:33738"/>
        <dbReference type="ChEBI" id="CHEBI:57844"/>
        <dbReference type="ChEBI" id="CHEBI:57856"/>
        <dbReference type="ChEBI" id="CHEBI:59789"/>
        <dbReference type="ChEBI" id="CHEBI:74411"/>
        <dbReference type="ChEBI" id="CHEBI:74497"/>
        <dbReference type="EC" id="2.1.1.192"/>
    </reaction>
</comment>
<comment type="catalytic activity">
    <reaction evidence="1">
        <text>adenosine(37) in tRNA + 2 reduced [2Fe-2S]-[ferredoxin] + 2 S-adenosyl-L-methionine = 2-methyladenosine(37) in tRNA + 5'-deoxyadenosine + L-methionine + 2 oxidized [2Fe-2S]-[ferredoxin] + S-adenosyl-L-homocysteine</text>
        <dbReference type="Rhea" id="RHEA:43332"/>
        <dbReference type="Rhea" id="RHEA-COMP:10000"/>
        <dbReference type="Rhea" id="RHEA-COMP:10001"/>
        <dbReference type="Rhea" id="RHEA-COMP:10162"/>
        <dbReference type="Rhea" id="RHEA-COMP:10485"/>
        <dbReference type="ChEBI" id="CHEBI:17319"/>
        <dbReference type="ChEBI" id="CHEBI:33737"/>
        <dbReference type="ChEBI" id="CHEBI:33738"/>
        <dbReference type="ChEBI" id="CHEBI:57844"/>
        <dbReference type="ChEBI" id="CHEBI:57856"/>
        <dbReference type="ChEBI" id="CHEBI:59789"/>
        <dbReference type="ChEBI" id="CHEBI:74411"/>
        <dbReference type="ChEBI" id="CHEBI:74497"/>
        <dbReference type="EC" id="2.1.1.192"/>
    </reaction>
</comment>
<comment type="cofactor">
    <cofactor evidence="1">
        <name>[4Fe-4S] cluster</name>
        <dbReference type="ChEBI" id="CHEBI:49883"/>
    </cofactor>
    <text evidence="1">Binds 1 [4Fe-4S] cluster. The cluster is coordinated with 3 cysteines and an exchangeable S-adenosyl-L-methionine.</text>
</comment>
<comment type="subcellular location">
    <subcellularLocation>
        <location evidence="1">Cytoplasm</location>
    </subcellularLocation>
</comment>
<comment type="miscellaneous">
    <text evidence="1">Reaction proceeds by a ping-pong mechanism involving intermediate methylation of a conserved cysteine residue.</text>
</comment>
<comment type="similarity">
    <text evidence="1">Belongs to the radical SAM superfamily. RlmN family.</text>
</comment>
<reference key="1">
    <citation type="journal article" date="2009" name="Appl. Environ. Microbiol.">
        <title>Genome analysis of the meat starter culture bacterium Staphylococcus carnosus TM300.</title>
        <authorList>
            <person name="Rosenstein R."/>
            <person name="Nerz C."/>
            <person name="Biswas L."/>
            <person name="Resch A."/>
            <person name="Raddatz G."/>
            <person name="Schuster S.C."/>
            <person name="Goetz F."/>
        </authorList>
    </citation>
    <scope>NUCLEOTIDE SEQUENCE [LARGE SCALE GENOMIC DNA]</scope>
    <source>
        <strain>TM300</strain>
    </source>
</reference>
<evidence type="ECO:0000255" key="1">
    <source>
        <dbReference type="HAMAP-Rule" id="MF_01849"/>
    </source>
</evidence>
<evidence type="ECO:0000255" key="2">
    <source>
        <dbReference type="PROSITE-ProRule" id="PRU01266"/>
    </source>
</evidence>
<gene>
    <name evidence="1" type="primary">rlmN</name>
    <name type="ordered locus">Sca_0838</name>
</gene>
<accession>B9DPM7</accession>
<keyword id="KW-0004">4Fe-4S</keyword>
<keyword id="KW-0046">Antibiotic resistance</keyword>
<keyword id="KW-0963">Cytoplasm</keyword>
<keyword id="KW-1015">Disulfide bond</keyword>
<keyword id="KW-0408">Iron</keyword>
<keyword id="KW-0411">Iron-sulfur</keyword>
<keyword id="KW-0479">Metal-binding</keyword>
<keyword id="KW-0489">Methyltransferase</keyword>
<keyword id="KW-1185">Reference proteome</keyword>
<keyword id="KW-0698">rRNA processing</keyword>
<keyword id="KW-0949">S-adenosyl-L-methionine</keyword>
<keyword id="KW-0808">Transferase</keyword>
<keyword id="KW-0819">tRNA processing</keyword>
<sequence length="364" mass="42157">MITTQKKKKNRFLPDFDKQSIYSLRYEEMQDWLVEHGQQKFRAKQIFQWLYEKRVDSIDEMTNLSKDLREVLKDNFTMTTLETVVKQESRDGTIKFLFELQDGYTIETVLMRHEYGNSVCVTTQVGCRIGCTFCASTLGGLKRNLEAGEIVSQVLTVQKVLDATDERVSQIVIMGIGEPFENYDEMMDFLKIVNYDNGLNIGARHITVSTSGIIPRIYDFAEEDIQINFAVSLHAANDEIRSKLMPINRAYSIDKLMEAIQYYQEKTNRRITFEYGLFGGVNDQLTHARELAHLIQNLNCHVNLIPVNHVPERNYVKTPKEDIFKFEKELKRLGINATIRREQGSDIDAACGQLRAKERQVETR</sequence>
<proteinExistence type="inferred from homology"/>
<name>RLMN_STACT</name>